<gene>
    <name type="primary">Rgr</name>
</gene>
<evidence type="ECO:0000250" key="1"/>
<evidence type="ECO:0000255" key="2"/>
<evidence type="ECO:0000255" key="3">
    <source>
        <dbReference type="PROSITE-ProRule" id="PRU00521"/>
    </source>
</evidence>
<organism>
    <name type="scientific">Mus musculus</name>
    <name type="common">Mouse</name>
    <dbReference type="NCBI Taxonomy" id="10090"/>
    <lineage>
        <taxon>Eukaryota</taxon>
        <taxon>Metazoa</taxon>
        <taxon>Chordata</taxon>
        <taxon>Craniata</taxon>
        <taxon>Vertebrata</taxon>
        <taxon>Euteleostomi</taxon>
        <taxon>Mammalia</taxon>
        <taxon>Eutheria</taxon>
        <taxon>Euarchontoglires</taxon>
        <taxon>Glires</taxon>
        <taxon>Rodentia</taxon>
        <taxon>Myomorpha</taxon>
        <taxon>Muroidea</taxon>
        <taxon>Muridae</taxon>
        <taxon>Murinae</taxon>
        <taxon>Mus</taxon>
        <taxon>Mus</taxon>
    </lineage>
</organism>
<reference key="1">
    <citation type="journal article" date="1998" name="Mol. Vis.">
        <title>Structure and developmental expression of the mouse RGR opsin gene.</title>
        <authorList>
            <person name="Tao L."/>
            <person name="Shen D."/>
            <person name="Pandey S."/>
            <person name="Hao W."/>
            <person name="Rich K.A."/>
            <person name="Fong H.K.W."/>
        </authorList>
    </citation>
    <scope>NUCLEOTIDE SEQUENCE [MRNA]</scope>
    <source>
        <tissue>Retina</tissue>
    </source>
</reference>
<accession>Q9Z2B3</accession>
<proteinExistence type="evidence at transcript level"/>
<protein>
    <recommendedName>
        <fullName>RPE-retinal G protein-coupled receptor</fullName>
    </recommendedName>
</protein>
<comment type="function">
    <text evidence="1">Receptor for all-trans- and 11-cis-retinal. Binds preferentially to the former and may catalyze the isomerization of the chromophore by a retinochrome-like mechanism (By similarity).</text>
</comment>
<comment type="subcellular location">
    <subcellularLocation>
        <location>Membrane</location>
        <topology>Multi-pass membrane protein</topology>
    </subcellularLocation>
</comment>
<comment type="PTM">
    <text evidence="1">Covalently binds all-trans- and 11-cis-retinal.</text>
</comment>
<comment type="similarity">
    <text evidence="3">Belongs to the G-protein coupled receptor 1 family. Opsin subfamily.</text>
</comment>
<name>RGR_MOUSE</name>
<dbReference type="EMBL" id="AF076930">
    <property type="protein sequence ID" value="AAC69836.1"/>
    <property type="molecule type" value="mRNA"/>
</dbReference>
<dbReference type="CCDS" id="CCDS26949.1"/>
<dbReference type="RefSeq" id="NP_067315.1">
    <property type="nucleotide sequence ID" value="NM_021340.4"/>
</dbReference>
<dbReference type="SMR" id="Q9Z2B3"/>
<dbReference type="FunCoup" id="Q9Z2B3">
    <property type="interactions" value="986"/>
</dbReference>
<dbReference type="STRING" id="10090.ENSMUSP00000022338"/>
<dbReference type="PhosphoSitePlus" id="Q9Z2B3"/>
<dbReference type="PaxDb" id="10090-ENSMUSP00000022338"/>
<dbReference type="ProteomicsDB" id="254948"/>
<dbReference type="Antibodypedia" id="15900">
    <property type="antibodies" value="221 antibodies from 29 providers"/>
</dbReference>
<dbReference type="DNASU" id="57811"/>
<dbReference type="Ensembl" id="ENSMUST00000022338.7">
    <property type="protein sequence ID" value="ENSMUSP00000022338.6"/>
    <property type="gene ID" value="ENSMUSG00000021804.7"/>
</dbReference>
<dbReference type="GeneID" id="57811"/>
<dbReference type="KEGG" id="mmu:57811"/>
<dbReference type="UCSC" id="uc007tbp.2">
    <property type="organism name" value="mouse"/>
</dbReference>
<dbReference type="AGR" id="MGI:1929473"/>
<dbReference type="CTD" id="5995"/>
<dbReference type="MGI" id="MGI:1929473">
    <property type="gene designation" value="Rgr"/>
</dbReference>
<dbReference type="VEuPathDB" id="HostDB:ENSMUSG00000021804"/>
<dbReference type="eggNOG" id="KOG3656">
    <property type="taxonomic scope" value="Eukaryota"/>
</dbReference>
<dbReference type="GeneTree" id="ENSGT01130000278323"/>
<dbReference type="HOGENOM" id="CLU_009579_3_2_1"/>
<dbReference type="InParanoid" id="Q9Z2B3"/>
<dbReference type="OMA" id="KYRMIPA"/>
<dbReference type="OrthoDB" id="10015560at2759"/>
<dbReference type="PhylomeDB" id="Q9Z2B3"/>
<dbReference type="TreeFam" id="TF324998"/>
<dbReference type="Reactome" id="R-MMU-418594">
    <property type="pathway name" value="G alpha (i) signalling events"/>
</dbReference>
<dbReference type="Reactome" id="R-MMU-419771">
    <property type="pathway name" value="Opsins"/>
</dbReference>
<dbReference type="BioGRID-ORCS" id="57811">
    <property type="hits" value="3 hits in 75 CRISPR screens"/>
</dbReference>
<dbReference type="ChiTaRS" id="Rgr">
    <property type="organism name" value="mouse"/>
</dbReference>
<dbReference type="PRO" id="PR:Q9Z2B3"/>
<dbReference type="Proteomes" id="UP000000589">
    <property type="component" value="Chromosome 14"/>
</dbReference>
<dbReference type="RNAct" id="Q9Z2B3">
    <property type="molecule type" value="protein"/>
</dbReference>
<dbReference type="Bgee" id="ENSMUSG00000021804">
    <property type="expression patterns" value="Expressed in pigmented layer of retina and 15 other cell types or tissues"/>
</dbReference>
<dbReference type="ExpressionAtlas" id="Q9Z2B3">
    <property type="expression patterns" value="baseline and differential"/>
</dbReference>
<dbReference type="GO" id="GO:0005886">
    <property type="term" value="C:plasma membrane"/>
    <property type="evidence" value="ECO:0000314"/>
    <property type="project" value="MGI"/>
</dbReference>
<dbReference type="GO" id="GO:0004930">
    <property type="term" value="F:G protein-coupled receptor activity"/>
    <property type="evidence" value="ECO:0000250"/>
    <property type="project" value="MGI"/>
</dbReference>
<dbReference type="GO" id="GO:0009881">
    <property type="term" value="F:photoreceptor activity"/>
    <property type="evidence" value="ECO:0007669"/>
    <property type="project" value="UniProtKB-KW"/>
</dbReference>
<dbReference type="GO" id="GO:0007602">
    <property type="term" value="P:phototransduction"/>
    <property type="evidence" value="ECO:0007669"/>
    <property type="project" value="UniProtKB-KW"/>
</dbReference>
<dbReference type="GO" id="GO:0007601">
    <property type="term" value="P:visual perception"/>
    <property type="evidence" value="ECO:0007669"/>
    <property type="project" value="UniProtKB-KW"/>
</dbReference>
<dbReference type="CDD" id="cd15072">
    <property type="entry name" value="7tmA_Retinal_GPR"/>
    <property type="match status" value="1"/>
</dbReference>
<dbReference type="FunFam" id="1.20.1070.10:FF:000139">
    <property type="entry name" value="RPE-retinal G protein-coupled receptor isoform X1"/>
    <property type="match status" value="1"/>
</dbReference>
<dbReference type="Gene3D" id="1.20.1070.10">
    <property type="entry name" value="Rhodopsin 7-helix transmembrane proteins"/>
    <property type="match status" value="1"/>
</dbReference>
<dbReference type="InterPro" id="IPR050125">
    <property type="entry name" value="GPCR_opsins"/>
</dbReference>
<dbReference type="InterPro" id="IPR000276">
    <property type="entry name" value="GPCR_Rhodpsn"/>
</dbReference>
<dbReference type="InterPro" id="IPR017452">
    <property type="entry name" value="GPCR_Rhodpsn_7TM"/>
</dbReference>
<dbReference type="InterPro" id="IPR001793">
    <property type="entry name" value="RPE_GPCR"/>
</dbReference>
<dbReference type="PANTHER" id="PTHR24240">
    <property type="entry name" value="OPSIN"/>
    <property type="match status" value="1"/>
</dbReference>
<dbReference type="Pfam" id="PF00001">
    <property type="entry name" value="7tm_1"/>
    <property type="match status" value="1"/>
</dbReference>
<dbReference type="PRINTS" id="PR00667">
    <property type="entry name" value="RPERETINALR"/>
</dbReference>
<dbReference type="SUPFAM" id="SSF81321">
    <property type="entry name" value="Family A G protein-coupled receptor-like"/>
    <property type="match status" value="1"/>
</dbReference>
<dbReference type="PROSITE" id="PS50262">
    <property type="entry name" value="G_PROTEIN_RECEP_F1_2"/>
    <property type="match status" value="1"/>
</dbReference>
<feature type="chain" id="PRO_0000197823" description="RPE-retinal G protein-coupled receptor">
    <location>
        <begin position="1"/>
        <end position="291"/>
    </location>
</feature>
<feature type="topological domain" description="Extracellular" evidence="2">
    <location>
        <begin position="1"/>
        <end position="15"/>
    </location>
</feature>
<feature type="transmembrane region" description="Helical; Name=1" evidence="2">
    <location>
        <begin position="16"/>
        <end position="36"/>
    </location>
</feature>
<feature type="topological domain" description="Cytoplasmic" evidence="2">
    <location>
        <begin position="37"/>
        <end position="52"/>
    </location>
</feature>
<feature type="transmembrane region" description="Helical; Name=2" evidence="2">
    <location>
        <begin position="53"/>
        <end position="73"/>
    </location>
</feature>
<feature type="topological domain" description="Extracellular" evidence="2">
    <location>
        <begin position="74"/>
        <end position="91"/>
    </location>
</feature>
<feature type="transmembrane region" description="Helical; Name=3" evidence="2">
    <location>
        <begin position="92"/>
        <end position="112"/>
    </location>
</feature>
<feature type="topological domain" description="Cytoplasmic" evidence="2">
    <location>
        <begin position="113"/>
        <end position="130"/>
    </location>
</feature>
<feature type="transmembrane region" description="Helical; Name=4" evidence="2">
    <location>
        <begin position="131"/>
        <end position="151"/>
    </location>
</feature>
<feature type="topological domain" description="Extracellular" evidence="2">
    <location>
        <begin position="152"/>
        <end position="175"/>
    </location>
</feature>
<feature type="transmembrane region" description="Helical; Name=5" evidence="2">
    <location>
        <begin position="176"/>
        <end position="196"/>
    </location>
</feature>
<feature type="topological domain" description="Cytoplasmic" evidence="2">
    <location>
        <begin position="197"/>
        <end position="219"/>
    </location>
</feature>
<feature type="transmembrane region" description="Helical; Name=6" evidence="2">
    <location>
        <begin position="220"/>
        <end position="240"/>
    </location>
</feature>
<feature type="topological domain" description="Extracellular" evidence="2">
    <location>
        <begin position="241"/>
        <end position="247"/>
    </location>
</feature>
<feature type="transmembrane region" description="Helical; Name=7" evidence="2">
    <location>
        <begin position="248"/>
        <end position="268"/>
    </location>
</feature>
<feature type="topological domain" description="Cytoplasmic" evidence="2">
    <location>
        <begin position="269"/>
        <end position="291"/>
    </location>
</feature>
<feature type="modified residue" description="N6-(retinylidene)lysine" evidence="1">
    <location>
        <position position="255"/>
    </location>
</feature>
<feature type="disulfide bond" evidence="3">
    <location>
        <begin position="88"/>
        <end position="162"/>
    </location>
</feature>
<keyword id="KW-0157">Chromophore</keyword>
<keyword id="KW-1015">Disulfide bond</keyword>
<keyword id="KW-0297">G-protein coupled receptor</keyword>
<keyword id="KW-0472">Membrane</keyword>
<keyword id="KW-0600">Photoreceptor protein</keyword>
<keyword id="KW-0675">Receptor</keyword>
<keyword id="KW-1185">Reference proteome</keyword>
<keyword id="KW-0681">Retinal protein</keyword>
<keyword id="KW-0716">Sensory transduction</keyword>
<keyword id="KW-0807">Transducer</keyword>
<keyword id="KW-0812">Transmembrane</keyword>
<keyword id="KW-1133">Transmembrane helix</keyword>
<keyword id="KW-0844">Vision</keyword>
<sequence>MAATRALPAGLGELEVLAVGTVLLMEALSGISLNGLTIFSFCKTPDLRTPSNLLVLSLALADTGISLNALVAAVSSLLRRWPHGSEGCQVHGFQGFATALASICGSAAVAWGRYHHYCTRRQLAWDTAIPLVLFVWMSSAFWASLPLMGWGHYDYEPVGTCCTLDYSRGDRNFISFLFTMAFFNFLVPLFITHTSYRFMEQKFSRSGHLPVNTTLPGRMLLLGWGPYALLYLYAAIADVSFISPKLQMVPALIAKTMPTINAINYALHREMVCRGTWQCLSPQKSKKDRTQ</sequence>